<evidence type="ECO:0000255" key="1">
    <source>
        <dbReference type="HAMAP-Rule" id="MF_00120"/>
    </source>
</evidence>
<name>GATA_CHLL3</name>
<dbReference type="EC" id="6.3.5.7" evidence="1"/>
<dbReference type="EMBL" id="CP000096">
    <property type="protein sequence ID" value="ABB24603.1"/>
    <property type="molecule type" value="Genomic_DNA"/>
</dbReference>
<dbReference type="RefSeq" id="WP_011358475.1">
    <property type="nucleotide sequence ID" value="NC_007512.1"/>
</dbReference>
<dbReference type="SMR" id="Q3B228"/>
<dbReference type="STRING" id="319225.Plut_1749"/>
<dbReference type="KEGG" id="plt:Plut_1749"/>
<dbReference type="eggNOG" id="COG0154">
    <property type="taxonomic scope" value="Bacteria"/>
</dbReference>
<dbReference type="HOGENOM" id="CLU_009600_0_3_10"/>
<dbReference type="OrthoDB" id="9811471at2"/>
<dbReference type="Proteomes" id="UP000002709">
    <property type="component" value="Chromosome"/>
</dbReference>
<dbReference type="GO" id="GO:0030956">
    <property type="term" value="C:glutamyl-tRNA(Gln) amidotransferase complex"/>
    <property type="evidence" value="ECO:0007669"/>
    <property type="project" value="InterPro"/>
</dbReference>
<dbReference type="GO" id="GO:0005524">
    <property type="term" value="F:ATP binding"/>
    <property type="evidence" value="ECO:0007669"/>
    <property type="project" value="UniProtKB-KW"/>
</dbReference>
<dbReference type="GO" id="GO:0050567">
    <property type="term" value="F:glutaminyl-tRNA synthase (glutamine-hydrolyzing) activity"/>
    <property type="evidence" value="ECO:0007669"/>
    <property type="project" value="UniProtKB-UniRule"/>
</dbReference>
<dbReference type="GO" id="GO:0006412">
    <property type="term" value="P:translation"/>
    <property type="evidence" value="ECO:0007669"/>
    <property type="project" value="UniProtKB-UniRule"/>
</dbReference>
<dbReference type="Gene3D" id="3.90.1300.10">
    <property type="entry name" value="Amidase signature (AS) domain"/>
    <property type="match status" value="1"/>
</dbReference>
<dbReference type="HAMAP" id="MF_00120">
    <property type="entry name" value="GatA"/>
    <property type="match status" value="1"/>
</dbReference>
<dbReference type="InterPro" id="IPR000120">
    <property type="entry name" value="Amidase"/>
</dbReference>
<dbReference type="InterPro" id="IPR020556">
    <property type="entry name" value="Amidase_CS"/>
</dbReference>
<dbReference type="InterPro" id="IPR023631">
    <property type="entry name" value="Amidase_dom"/>
</dbReference>
<dbReference type="InterPro" id="IPR036928">
    <property type="entry name" value="AS_sf"/>
</dbReference>
<dbReference type="InterPro" id="IPR004412">
    <property type="entry name" value="GatA"/>
</dbReference>
<dbReference type="NCBIfam" id="TIGR00132">
    <property type="entry name" value="gatA"/>
    <property type="match status" value="1"/>
</dbReference>
<dbReference type="PANTHER" id="PTHR11895:SF151">
    <property type="entry name" value="GLUTAMYL-TRNA(GLN) AMIDOTRANSFERASE SUBUNIT A"/>
    <property type="match status" value="1"/>
</dbReference>
<dbReference type="PANTHER" id="PTHR11895">
    <property type="entry name" value="TRANSAMIDASE"/>
    <property type="match status" value="1"/>
</dbReference>
<dbReference type="Pfam" id="PF01425">
    <property type="entry name" value="Amidase"/>
    <property type="match status" value="1"/>
</dbReference>
<dbReference type="SUPFAM" id="SSF75304">
    <property type="entry name" value="Amidase signature (AS) enzymes"/>
    <property type="match status" value="1"/>
</dbReference>
<dbReference type="PROSITE" id="PS00571">
    <property type="entry name" value="AMIDASES"/>
    <property type="match status" value="1"/>
</dbReference>
<gene>
    <name evidence="1" type="primary">gatA</name>
    <name type="ordered locus">Plut_1749</name>
</gene>
<protein>
    <recommendedName>
        <fullName evidence="1">Glutamyl-tRNA(Gln) amidotransferase subunit A</fullName>
        <shortName evidence="1">Glu-ADT subunit A</shortName>
        <ecNumber evidence="1">6.3.5.7</ecNumber>
    </recommendedName>
</protein>
<reference key="1">
    <citation type="submission" date="2005-08" db="EMBL/GenBank/DDBJ databases">
        <title>Complete sequence of Pelodictyon luteolum DSM 273.</title>
        <authorList>
            <consortium name="US DOE Joint Genome Institute"/>
            <person name="Copeland A."/>
            <person name="Lucas S."/>
            <person name="Lapidus A."/>
            <person name="Barry K."/>
            <person name="Detter J.C."/>
            <person name="Glavina T."/>
            <person name="Hammon N."/>
            <person name="Israni S."/>
            <person name="Pitluck S."/>
            <person name="Bryant D."/>
            <person name="Schmutz J."/>
            <person name="Larimer F."/>
            <person name="Land M."/>
            <person name="Kyrpides N."/>
            <person name="Ivanova N."/>
            <person name="Richardson P."/>
        </authorList>
    </citation>
    <scope>NUCLEOTIDE SEQUENCE [LARGE SCALE GENOMIC DNA]</scope>
    <source>
        <strain>DSM 273 / BCRC 81028 / 2530</strain>
    </source>
</reference>
<feature type="chain" id="PRO_0000241129" description="Glutamyl-tRNA(Gln) amidotransferase subunit A">
    <location>
        <begin position="1"/>
        <end position="485"/>
    </location>
</feature>
<feature type="active site" description="Charge relay system" evidence="1">
    <location>
        <position position="76"/>
    </location>
</feature>
<feature type="active site" description="Charge relay system" evidence="1">
    <location>
        <position position="151"/>
    </location>
</feature>
<feature type="active site" description="Acyl-ester intermediate" evidence="1">
    <location>
        <position position="175"/>
    </location>
</feature>
<accession>Q3B228</accession>
<proteinExistence type="inferred from homology"/>
<comment type="function">
    <text evidence="1">Allows the formation of correctly charged Gln-tRNA(Gln) through the transamidation of misacylated Glu-tRNA(Gln) in organisms which lack glutaminyl-tRNA synthetase. The reaction takes place in the presence of glutamine and ATP through an activated gamma-phospho-Glu-tRNA(Gln).</text>
</comment>
<comment type="catalytic activity">
    <reaction evidence="1">
        <text>L-glutamyl-tRNA(Gln) + L-glutamine + ATP + H2O = L-glutaminyl-tRNA(Gln) + L-glutamate + ADP + phosphate + H(+)</text>
        <dbReference type="Rhea" id="RHEA:17521"/>
        <dbReference type="Rhea" id="RHEA-COMP:9681"/>
        <dbReference type="Rhea" id="RHEA-COMP:9684"/>
        <dbReference type="ChEBI" id="CHEBI:15377"/>
        <dbReference type="ChEBI" id="CHEBI:15378"/>
        <dbReference type="ChEBI" id="CHEBI:29985"/>
        <dbReference type="ChEBI" id="CHEBI:30616"/>
        <dbReference type="ChEBI" id="CHEBI:43474"/>
        <dbReference type="ChEBI" id="CHEBI:58359"/>
        <dbReference type="ChEBI" id="CHEBI:78520"/>
        <dbReference type="ChEBI" id="CHEBI:78521"/>
        <dbReference type="ChEBI" id="CHEBI:456216"/>
        <dbReference type="EC" id="6.3.5.7"/>
    </reaction>
</comment>
<comment type="subunit">
    <text evidence="1">Heterotrimer of A, B and C subunits.</text>
</comment>
<comment type="similarity">
    <text evidence="1">Belongs to the amidase family. GatA subfamily.</text>
</comment>
<keyword id="KW-0067">ATP-binding</keyword>
<keyword id="KW-0436">Ligase</keyword>
<keyword id="KW-0547">Nucleotide-binding</keyword>
<keyword id="KW-0648">Protein biosynthesis</keyword>
<keyword id="KW-1185">Reference proteome</keyword>
<sequence length="485" mass="52109">MQFSSYEDLRSRLLSHAVTCEAVARHYLDRIRSHEGDNIYITVFENEALQRARSLDLKLAGGGTPGRLFGMPMAIKDNISMKGAPLTCASKMLEGYTSVYDATAVLRLEAEDAIFLGKTNMDEFAMGSSNENSAFGPVPNPFDNQRVPGGSSGGSAAAVAAGLAMVALGSDTGGSVRQPAGFCDIVGLKPTYGRISRYGLVAFASSFDQIGVLALNCDDAALVLEVMAGVDGKDATSSAHPVPAYAAEMTDVSLKGLRIGVPEEFFNESLNPDVASVVRAKLEELRLQGAELVNLTLPQSDYAIAAYYILVTAEASSNLARFDGARYGYRSEAADDLSSMYVKSRTEGFGAEVKRRIMLGTYVLSAGYYDTYYKKAQQVRRLFQDRYREALKGVDVIAGPTSPFPPFGIGDKTADPLEMYLADVFTVPASIVGMPALSVPVGYDSLGLPVGIHLICNFFEEGKMLGIARHMQRPDSSRIPAPSNH</sequence>
<organism>
    <name type="scientific">Chlorobium luteolum (strain DSM 273 / BCRC 81028 / 2530)</name>
    <name type="common">Pelodictyon luteolum</name>
    <dbReference type="NCBI Taxonomy" id="319225"/>
    <lineage>
        <taxon>Bacteria</taxon>
        <taxon>Pseudomonadati</taxon>
        <taxon>Chlorobiota</taxon>
        <taxon>Chlorobiia</taxon>
        <taxon>Chlorobiales</taxon>
        <taxon>Chlorobiaceae</taxon>
        <taxon>Chlorobium/Pelodictyon group</taxon>
        <taxon>Pelodictyon</taxon>
    </lineage>
</organism>